<name>LOLD_YERPA</name>
<proteinExistence type="inferred from homology"/>
<feature type="chain" id="PRO_0000272169" description="Lipoprotein-releasing system ATP-binding protein LolD">
    <location>
        <begin position="1"/>
        <end position="234"/>
    </location>
</feature>
<feature type="domain" description="ABC transporter" evidence="1">
    <location>
        <begin position="7"/>
        <end position="233"/>
    </location>
</feature>
<feature type="binding site" evidence="1">
    <location>
        <begin position="43"/>
        <end position="50"/>
    </location>
    <ligand>
        <name>ATP</name>
        <dbReference type="ChEBI" id="CHEBI:30616"/>
    </ligand>
</feature>
<evidence type="ECO:0000255" key="1">
    <source>
        <dbReference type="HAMAP-Rule" id="MF_01708"/>
    </source>
</evidence>
<reference key="1">
    <citation type="journal article" date="2006" name="J. Bacteriol.">
        <title>Complete genome sequence of Yersinia pestis strains Antiqua and Nepal516: evidence of gene reduction in an emerging pathogen.</title>
        <authorList>
            <person name="Chain P.S.G."/>
            <person name="Hu P."/>
            <person name="Malfatti S.A."/>
            <person name="Radnedge L."/>
            <person name="Larimer F."/>
            <person name="Vergez L.M."/>
            <person name="Worsham P."/>
            <person name="Chu M.C."/>
            <person name="Andersen G.L."/>
        </authorList>
    </citation>
    <scope>NUCLEOTIDE SEQUENCE [LARGE SCALE GENOMIC DNA]</scope>
    <source>
        <strain>Antiqua</strain>
    </source>
</reference>
<sequence length="234" mass="25642">MSNHPLLQCINLCKRYQEGQLHTDVLRNVSFAIEPGELMAIVGSSGSGKSTLLHLLGGLDSPTSGEVIYQGRSLNQLSSTAKAELRNRELGFIYQFHHLLPDFTALENVAMPLLIGGSKPAEAQEKAHEMLAAVGLEKRSKHRPSELSGGERQRVAIARSLVNNPSLVLADEPTGNLDQRNADSIFNLLGELNVRQGTAFLVVTHDLQLAKRMSRQLEMRDGQLQHHLTLVGAE</sequence>
<keyword id="KW-0067">ATP-binding</keyword>
<keyword id="KW-0997">Cell inner membrane</keyword>
<keyword id="KW-1003">Cell membrane</keyword>
<keyword id="KW-0472">Membrane</keyword>
<keyword id="KW-0547">Nucleotide-binding</keyword>
<keyword id="KW-1278">Translocase</keyword>
<keyword id="KW-0813">Transport</keyword>
<comment type="function">
    <text evidence="1">Part of the ABC transporter complex LolCDE involved in the translocation of mature outer membrane-directed lipoproteins, from the inner membrane to the periplasmic chaperone, LolA. Responsible for the formation of the LolA-lipoprotein complex in an ATP-dependent manner.</text>
</comment>
<comment type="subunit">
    <text evidence="1">The complex is composed of two ATP-binding proteins (LolD) and two transmembrane proteins (LolC and LolE).</text>
</comment>
<comment type="subcellular location">
    <subcellularLocation>
        <location evidence="1">Cell inner membrane</location>
        <topology evidence="1">Peripheral membrane protein</topology>
    </subcellularLocation>
</comment>
<comment type="similarity">
    <text evidence="1">Belongs to the ABC transporter superfamily. Lipoprotein translocase (TC 3.A.1.125) family.</text>
</comment>
<dbReference type="EC" id="7.6.2.-" evidence="1"/>
<dbReference type="EMBL" id="CP000308">
    <property type="protein sequence ID" value="ABG13864.1"/>
    <property type="molecule type" value="Genomic_DNA"/>
</dbReference>
<dbReference type="RefSeq" id="WP_002210923.1">
    <property type="nucleotide sequence ID" value="NZ_CP009906.1"/>
</dbReference>
<dbReference type="SMR" id="Q1C6Q8"/>
<dbReference type="GeneID" id="57976946"/>
<dbReference type="KEGG" id="ypa:YPA_1898"/>
<dbReference type="Proteomes" id="UP000001971">
    <property type="component" value="Chromosome"/>
</dbReference>
<dbReference type="GO" id="GO:0005886">
    <property type="term" value="C:plasma membrane"/>
    <property type="evidence" value="ECO:0007669"/>
    <property type="project" value="UniProtKB-SubCell"/>
</dbReference>
<dbReference type="GO" id="GO:0005524">
    <property type="term" value="F:ATP binding"/>
    <property type="evidence" value="ECO:0007669"/>
    <property type="project" value="UniProtKB-KW"/>
</dbReference>
<dbReference type="GO" id="GO:0016887">
    <property type="term" value="F:ATP hydrolysis activity"/>
    <property type="evidence" value="ECO:0007669"/>
    <property type="project" value="InterPro"/>
</dbReference>
<dbReference type="GO" id="GO:0022857">
    <property type="term" value="F:transmembrane transporter activity"/>
    <property type="evidence" value="ECO:0007669"/>
    <property type="project" value="TreeGrafter"/>
</dbReference>
<dbReference type="GO" id="GO:0044874">
    <property type="term" value="P:lipoprotein localization to outer membrane"/>
    <property type="evidence" value="ECO:0007669"/>
    <property type="project" value="TreeGrafter"/>
</dbReference>
<dbReference type="GO" id="GO:0089705">
    <property type="term" value="P:protein localization to outer membrane"/>
    <property type="evidence" value="ECO:0007669"/>
    <property type="project" value="TreeGrafter"/>
</dbReference>
<dbReference type="CDD" id="cd03255">
    <property type="entry name" value="ABC_MJ0796_LolCDE_FtsE"/>
    <property type="match status" value="1"/>
</dbReference>
<dbReference type="FunFam" id="3.40.50.300:FF:000230">
    <property type="entry name" value="Lipoprotein-releasing system ATP-binding protein LolD"/>
    <property type="match status" value="1"/>
</dbReference>
<dbReference type="Gene3D" id="3.40.50.300">
    <property type="entry name" value="P-loop containing nucleotide triphosphate hydrolases"/>
    <property type="match status" value="1"/>
</dbReference>
<dbReference type="InterPro" id="IPR003593">
    <property type="entry name" value="AAA+_ATPase"/>
</dbReference>
<dbReference type="InterPro" id="IPR003439">
    <property type="entry name" value="ABC_transporter-like_ATP-bd"/>
</dbReference>
<dbReference type="InterPro" id="IPR017871">
    <property type="entry name" value="ABC_transporter-like_CS"/>
</dbReference>
<dbReference type="InterPro" id="IPR015854">
    <property type="entry name" value="ABC_transpr_LolD-like"/>
</dbReference>
<dbReference type="InterPro" id="IPR011924">
    <property type="entry name" value="LolD_lipo_ATP-bd"/>
</dbReference>
<dbReference type="InterPro" id="IPR017911">
    <property type="entry name" value="MacB-like_ATP-bd"/>
</dbReference>
<dbReference type="InterPro" id="IPR027417">
    <property type="entry name" value="P-loop_NTPase"/>
</dbReference>
<dbReference type="NCBIfam" id="TIGR02211">
    <property type="entry name" value="LolD_lipo_ex"/>
    <property type="match status" value="1"/>
</dbReference>
<dbReference type="NCBIfam" id="NF008639">
    <property type="entry name" value="PRK11629.1"/>
    <property type="match status" value="1"/>
</dbReference>
<dbReference type="PANTHER" id="PTHR24220">
    <property type="entry name" value="IMPORT ATP-BINDING PROTEIN"/>
    <property type="match status" value="1"/>
</dbReference>
<dbReference type="PANTHER" id="PTHR24220:SF689">
    <property type="entry name" value="LIPOPROTEIN-RELEASING SYSTEM ATP-BINDING PROTEIN LOLD"/>
    <property type="match status" value="1"/>
</dbReference>
<dbReference type="Pfam" id="PF00005">
    <property type="entry name" value="ABC_tran"/>
    <property type="match status" value="1"/>
</dbReference>
<dbReference type="SMART" id="SM00382">
    <property type="entry name" value="AAA"/>
    <property type="match status" value="1"/>
</dbReference>
<dbReference type="SUPFAM" id="SSF52540">
    <property type="entry name" value="P-loop containing nucleoside triphosphate hydrolases"/>
    <property type="match status" value="1"/>
</dbReference>
<dbReference type="PROSITE" id="PS00211">
    <property type="entry name" value="ABC_TRANSPORTER_1"/>
    <property type="match status" value="1"/>
</dbReference>
<dbReference type="PROSITE" id="PS50893">
    <property type="entry name" value="ABC_TRANSPORTER_2"/>
    <property type="match status" value="1"/>
</dbReference>
<dbReference type="PROSITE" id="PS51244">
    <property type="entry name" value="LOLD"/>
    <property type="match status" value="1"/>
</dbReference>
<organism>
    <name type="scientific">Yersinia pestis bv. Antiqua (strain Antiqua)</name>
    <dbReference type="NCBI Taxonomy" id="360102"/>
    <lineage>
        <taxon>Bacteria</taxon>
        <taxon>Pseudomonadati</taxon>
        <taxon>Pseudomonadota</taxon>
        <taxon>Gammaproteobacteria</taxon>
        <taxon>Enterobacterales</taxon>
        <taxon>Yersiniaceae</taxon>
        <taxon>Yersinia</taxon>
    </lineage>
</organism>
<protein>
    <recommendedName>
        <fullName evidence="1">Lipoprotein-releasing system ATP-binding protein LolD</fullName>
        <ecNumber evidence="1">7.6.2.-</ecNumber>
    </recommendedName>
</protein>
<gene>
    <name evidence="1" type="primary">lolD</name>
    <name type="ordered locus">YPA_1898</name>
</gene>
<accession>Q1C6Q8</accession>